<sequence>MKHIVIPARFSSSRLPGKPLLLIHDRPMILRVVDQAKKVEGFDDLCVATDDERIAEICRAEGVDVVLTSADHPSGTDRLSEVARIKGWDADDIIVNVQGDEPLLPAQLVQQVAKLLVDKPNCSMSTLCEPIHALDEFQRDSIVKVVMSKQNEALYFSRATIPYDRDGAKRDEPTLHTQAFRHLGLYAYRVSLLQEYVTWEMGKLEKLESLEQLRVLENGHRIAIAVAEANLPPGVDTQADLDRLNNMPVESFE</sequence>
<gene>
    <name evidence="1" type="primary">kdsB</name>
    <name type="ordered locus">A1S_1557</name>
</gene>
<accession>A3M4Z0</accession>
<keyword id="KW-0002">3D-structure</keyword>
<keyword id="KW-0963">Cytoplasm</keyword>
<keyword id="KW-0448">Lipopolysaccharide biosynthesis</keyword>
<keyword id="KW-0548">Nucleotidyltransferase</keyword>
<keyword id="KW-0808">Transferase</keyword>
<protein>
    <recommendedName>
        <fullName evidence="1">3-deoxy-manno-octulosonate cytidylyltransferase</fullName>
        <ecNumber evidence="1">2.7.7.38</ecNumber>
    </recommendedName>
    <alternativeName>
        <fullName evidence="1">CMP-2-keto-3-deoxyoctulosonic acid synthase</fullName>
        <shortName evidence="1">CKS</shortName>
        <shortName evidence="1">CMP-KDO synthase</shortName>
    </alternativeName>
</protein>
<evidence type="ECO:0000255" key="1">
    <source>
        <dbReference type="HAMAP-Rule" id="MF_00057"/>
    </source>
</evidence>
<evidence type="ECO:0007829" key="2">
    <source>
        <dbReference type="PDB" id="4FCU"/>
    </source>
</evidence>
<comment type="function">
    <text evidence="1">Activates KDO (a required 8-carbon sugar) for incorporation into bacterial lipopolysaccharide in Gram-negative bacteria.</text>
</comment>
<comment type="catalytic activity">
    <reaction evidence="1">
        <text>3-deoxy-alpha-D-manno-oct-2-ulosonate + CTP = CMP-3-deoxy-beta-D-manno-octulosonate + diphosphate</text>
        <dbReference type="Rhea" id="RHEA:23448"/>
        <dbReference type="ChEBI" id="CHEBI:33019"/>
        <dbReference type="ChEBI" id="CHEBI:37563"/>
        <dbReference type="ChEBI" id="CHEBI:85986"/>
        <dbReference type="ChEBI" id="CHEBI:85987"/>
        <dbReference type="EC" id="2.7.7.38"/>
    </reaction>
</comment>
<comment type="pathway">
    <text evidence="1">Nucleotide-sugar biosynthesis; CMP-3-deoxy-D-manno-octulosonate biosynthesis; CMP-3-deoxy-D-manno-octulosonate from 3-deoxy-D-manno-octulosonate and CTP: step 1/1.</text>
</comment>
<comment type="pathway">
    <text evidence="1">Bacterial outer membrane biogenesis; lipopolysaccharide biosynthesis.</text>
</comment>
<comment type="subcellular location">
    <subcellularLocation>
        <location evidence="1">Cytoplasm</location>
    </subcellularLocation>
</comment>
<comment type="similarity">
    <text evidence="1">Belongs to the KdsB family.</text>
</comment>
<reference key="1">
    <citation type="journal article" date="2007" name="Genes Dev.">
        <title>New insights into Acinetobacter baumannii pathogenesis revealed by high-density pyrosequencing and transposon mutagenesis.</title>
        <authorList>
            <person name="Smith M.G."/>
            <person name="Gianoulis T.A."/>
            <person name="Pukatzki S."/>
            <person name="Mekalanos J.J."/>
            <person name="Ornston L.N."/>
            <person name="Gerstein M."/>
            <person name="Snyder M."/>
        </authorList>
    </citation>
    <scope>NUCLEOTIDE SEQUENCE [LARGE SCALE GENOMIC DNA]</scope>
    <source>
        <strain>ATCC 17978 / DSM 105126 / CIP 53.77 / LMG 1025 / NCDC KC755 / 5377</strain>
    </source>
</reference>
<name>KDSB_ACIBT</name>
<feature type="chain" id="PRO_0000369985" description="3-deoxy-manno-octulosonate cytidylyltransferase">
    <location>
        <begin position="1"/>
        <end position="253"/>
    </location>
</feature>
<feature type="strand" evidence="2">
    <location>
        <begin position="2"/>
        <end position="7"/>
    </location>
</feature>
<feature type="helix" evidence="2">
    <location>
        <begin position="18"/>
        <end position="20"/>
    </location>
</feature>
<feature type="strand" evidence="2">
    <location>
        <begin position="21"/>
        <end position="23"/>
    </location>
</feature>
<feature type="helix" evidence="2">
    <location>
        <begin position="28"/>
        <end position="37"/>
    </location>
</feature>
<feature type="strand" evidence="2">
    <location>
        <begin position="44"/>
        <end position="50"/>
    </location>
</feature>
<feature type="helix" evidence="2">
    <location>
        <begin position="52"/>
        <end position="59"/>
    </location>
</feature>
<feature type="turn" evidence="2">
    <location>
        <begin position="60"/>
        <end position="62"/>
    </location>
</feature>
<feature type="strand" evidence="2">
    <location>
        <begin position="65"/>
        <end position="67"/>
    </location>
</feature>
<feature type="helix" evidence="2">
    <location>
        <begin position="75"/>
        <end position="86"/>
    </location>
</feature>
<feature type="strand" evidence="2">
    <location>
        <begin position="93"/>
        <end position="96"/>
    </location>
</feature>
<feature type="helix" evidence="2">
    <location>
        <begin position="106"/>
        <end position="118"/>
    </location>
</feature>
<feature type="strand" evidence="2">
    <location>
        <begin position="123"/>
        <end position="130"/>
    </location>
</feature>
<feature type="helix" evidence="2">
    <location>
        <begin position="134"/>
        <end position="138"/>
    </location>
</feature>
<feature type="strand" evidence="2">
    <location>
        <begin position="144"/>
        <end position="147"/>
    </location>
</feature>
<feature type="strand" evidence="2">
    <location>
        <begin position="151"/>
        <end position="159"/>
    </location>
</feature>
<feature type="turn" evidence="2">
    <location>
        <begin position="165"/>
        <end position="167"/>
    </location>
</feature>
<feature type="strand" evidence="2">
    <location>
        <begin position="168"/>
        <end position="172"/>
    </location>
</feature>
<feature type="strand" evidence="2">
    <location>
        <begin position="180"/>
        <end position="189"/>
    </location>
</feature>
<feature type="helix" evidence="2">
    <location>
        <begin position="190"/>
        <end position="196"/>
    </location>
</feature>
<feature type="helix" evidence="2">
    <location>
        <begin position="203"/>
        <end position="208"/>
    </location>
</feature>
<feature type="helix" evidence="2">
    <location>
        <begin position="213"/>
        <end position="217"/>
    </location>
</feature>
<feature type="strand" evidence="2">
    <location>
        <begin position="222"/>
        <end position="226"/>
    </location>
</feature>
<feature type="helix" evidence="2">
    <location>
        <begin position="238"/>
        <end position="245"/>
    </location>
</feature>
<feature type="helix" evidence="2">
    <location>
        <begin position="249"/>
        <end position="252"/>
    </location>
</feature>
<dbReference type="EC" id="2.7.7.38" evidence="1"/>
<dbReference type="EMBL" id="CP000521">
    <property type="protein sequence ID" value="ABO11984.2"/>
    <property type="molecule type" value="Genomic_DNA"/>
</dbReference>
<dbReference type="RefSeq" id="WP_000680696.1">
    <property type="nucleotide sequence ID" value="NZ_CP053098.1"/>
</dbReference>
<dbReference type="PDB" id="3POL">
    <property type="method" value="X-ray"/>
    <property type="resolution" value="2.30 A"/>
    <property type="chains" value="A=1-253"/>
</dbReference>
<dbReference type="PDB" id="4FCU">
    <property type="method" value="X-ray"/>
    <property type="resolution" value="1.90 A"/>
    <property type="chains" value="A=1-253"/>
</dbReference>
<dbReference type="PDBsum" id="3POL"/>
<dbReference type="PDBsum" id="4FCU"/>
<dbReference type="SMR" id="A3M4Z0"/>
<dbReference type="KEGG" id="acb:A1S_1557"/>
<dbReference type="HOGENOM" id="CLU_065038_1_0_6"/>
<dbReference type="BRENDA" id="2.7.7.38">
    <property type="organism ID" value="98"/>
</dbReference>
<dbReference type="UniPathway" id="UPA00030"/>
<dbReference type="UniPathway" id="UPA00358">
    <property type="reaction ID" value="UER00476"/>
</dbReference>
<dbReference type="EvolutionaryTrace" id="A3M4Z0"/>
<dbReference type="GO" id="GO:0005829">
    <property type="term" value="C:cytosol"/>
    <property type="evidence" value="ECO:0007669"/>
    <property type="project" value="TreeGrafter"/>
</dbReference>
<dbReference type="GO" id="GO:0008690">
    <property type="term" value="F:3-deoxy-manno-octulosonate cytidylyltransferase activity"/>
    <property type="evidence" value="ECO:0007669"/>
    <property type="project" value="UniProtKB-UniRule"/>
</dbReference>
<dbReference type="GO" id="GO:0033468">
    <property type="term" value="P:CMP-keto-3-deoxy-D-manno-octulosonic acid biosynthetic process"/>
    <property type="evidence" value="ECO:0007669"/>
    <property type="project" value="UniProtKB-UniRule"/>
</dbReference>
<dbReference type="GO" id="GO:0009103">
    <property type="term" value="P:lipopolysaccharide biosynthetic process"/>
    <property type="evidence" value="ECO:0007669"/>
    <property type="project" value="UniProtKB-UniRule"/>
</dbReference>
<dbReference type="CDD" id="cd02517">
    <property type="entry name" value="CMP-KDO-Synthetase"/>
    <property type="match status" value="1"/>
</dbReference>
<dbReference type="FunFam" id="3.90.550.10:FF:000011">
    <property type="entry name" value="3-deoxy-manno-octulosonate cytidylyltransferase"/>
    <property type="match status" value="1"/>
</dbReference>
<dbReference type="Gene3D" id="3.90.550.10">
    <property type="entry name" value="Spore Coat Polysaccharide Biosynthesis Protein SpsA, Chain A"/>
    <property type="match status" value="1"/>
</dbReference>
<dbReference type="HAMAP" id="MF_00057">
    <property type="entry name" value="KdsB"/>
    <property type="match status" value="1"/>
</dbReference>
<dbReference type="InterPro" id="IPR003329">
    <property type="entry name" value="Cytidylyl_trans"/>
</dbReference>
<dbReference type="InterPro" id="IPR004528">
    <property type="entry name" value="KdsB"/>
</dbReference>
<dbReference type="InterPro" id="IPR029044">
    <property type="entry name" value="Nucleotide-diphossugar_trans"/>
</dbReference>
<dbReference type="NCBIfam" id="TIGR00466">
    <property type="entry name" value="kdsB"/>
    <property type="match status" value="1"/>
</dbReference>
<dbReference type="NCBIfam" id="NF003950">
    <property type="entry name" value="PRK05450.1-3"/>
    <property type="match status" value="1"/>
</dbReference>
<dbReference type="NCBIfam" id="NF003952">
    <property type="entry name" value="PRK05450.1-5"/>
    <property type="match status" value="1"/>
</dbReference>
<dbReference type="NCBIfam" id="NF009905">
    <property type="entry name" value="PRK13368.1"/>
    <property type="match status" value="1"/>
</dbReference>
<dbReference type="PANTHER" id="PTHR42866">
    <property type="entry name" value="3-DEOXY-MANNO-OCTULOSONATE CYTIDYLYLTRANSFERASE"/>
    <property type="match status" value="1"/>
</dbReference>
<dbReference type="PANTHER" id="PTHR42866:SF2">
    <property type="entry name" value="3-DEOXY-MANNO-OCTULOSONATE CYTIDYLYLTRANSFERASE, MITOCHONDRIAL"/>
    <property type="match status" value="1"/>
</dbReference>
<dbReference type="Pfam" id="PF02348">
    <property type="entry name" value="CTP_transf_3"/>
    <property type="match status" value="1"/>
</dbReference>
<dbReference type="SUPFAM" id="SSF53448">
    <property type="entry name" value="Nucleotide-diphospho-sugar transferases"/>
    <property type="match status" value="1"/>
</dbReference>
<organism>
    <name type="scientific">Acinetobacter baumannii (strain ATCC 17978 / DSM 105126 / CIP 53.77 / LMG 1025 / NCDC KC755 / 5377)</name>
    <dbReference type="NCBI Taxonomy" id="400667"/>
    <lineage>
        <taxon>Bacteria</taxon>
        <taxon>Pseudomonadati</taxon>
        <taxon>Pseudomonadota</taxon>
        <taxon>Gammaproteobacteria</taxon>
        <taxon>Moraxellales</taxon>
        <taxon>Moraxellaceae</taxon>
        <taxon>Acinetobacter</taxon>
        <taxon>Acinetobacter calcoaceticus/baumannii complex</taxon>
    </lineage>
</organism>
<proteinExistence type="evidence at protein level"/>